<name>DRE21_PICSI</name>
<proteinExistence type="evidence at transcript level"/>
<accession>B8LK84</accession>
<sequence>MEATVLLVTDSITLSSKVVTWAIQEFKEKADRGNNLCVLTQANSLEWKSYFSSSSLDVVVFFSEKCEFHKQNLVVELARILKPGGAVFIQTLVSMEDGTTKIHASLEHSLLLAGFVRPEVVASVEGLASSDGLELFALRAQKPTWETGSSFSLKKKSVQKQESLPKPGALSVKPEMNVDLEDLIDEESLLSEEDLKRPPLPSASDCEVSTKRKACKNCTCGRAELEEKQTKLGLTVEQLNNPQSACGNCGLGDAFRCSSCPYKGLSPFKLGEKVSLPGTLLTADM</sequence>
<dbReference type="EMBL" id="EF676142">
    <property type="protein sequence ID" value="ABR16064.1"/>
    <property type="molecule type" value="mRNA"/>
</dbReference>
<dbReference type="SMR" id="B8LK84"/>
<dbReference type="OMA" id="VVTWAIQ"/>
<dbReference type="GO" id="GO:0005758">
    <property type="term" value="C:mitochondrial intermembrane space"/>
    <property type="evidence" value="ECO:0007669"/>
    <property type="project" value="UniProtKB-SubCell"/>
</dbReference>
<dbReference type="GO" id="GO:0051537">
    <property type="term" value="F:2 iron, 2 sulfur cluster binding"/>
    <property type="evidence" value="ECO:0007669"/>
    <property type="project" value="UniProtKB-UniRule"/>
</dbReference>
<dbReference type="GO" id="GO:0051539">
    <property type="term" value="F:4 iron, 4 sulfur cluster binding"/>
    <property type="evidence" value="ECO:0007669"/>
    <property type="project" value="UniProtKB-KW"/>
</dbReference>
<dbReference type="GO" id="GO:0009055">
    <property type="term" value="F:electron transfer activity"/>
    <property type="evidence" value="ECO:0007669"/>
    <property type="project" value="UniProtKB-UniRule"/>
</dbReference>
<dbReference type="GO" id="GO:0046872">
    <property type="term" value="F:metal ion binding"/>
    <property type="evidence" value="ECO:0007669"/>
    <property type="project" value="UniProtKB-KW"/>
</dbReference>
<dbReference type="GO" id="GO:0016226">
    <property type="term" value="P:iron-sulfur cluster assembly"/>
    <property type="evidence" value="ECO:0007669"/>
    <property type="project" value="UniProtKB-UniRule"/>
</dbReference>
<dbReference type="Gene3D" id="3.40.50.150">
    <property type="entry name" value="Vaccinia Virus protein VP39"/>
    <property type="match status" value="1"/>
</dbReference>
<dbReference type="HAMAP" id="MF_03115">
    <property type="entry name" value="Anamorsin"/>
    <property type="match status" value="1"/>
</dbReference>
<dbReference type="InterPro" id="IPR007785">
    <property type="entry name" value="Anamorsin"/>
</dbReference>
<dbReference type="InterPro" id="IPR049011">
    <property type="entry name" value="Anamorsin_N_metazoan"/>
</dbReference>
<dbReference type="InterPro" id="IPR046408">
    <property type="entry name" value="CIAPIN1"/>
</dbReference>
<dbReference type="InterPro" id="IPR029063">
    <property type="entry name" value="SAM-dependent_MTases_sf"/>
</dbReference>
<dbReference type="PANTHER" id="PTHR13273">
    <property type="entry name" value="ANAMORSIN"/>
    <property type="match status" value="1"/>
</dbReference>
<dbReference type="PANTHER" id="PTHR13273:SF14">
    <property type="entry name" value="ANAMORSIN"/>
    <property type="match status" value="1"/>
</dbReference>
<dbReference type="Pfam" id="PF20922">
    <property type="entry name" value="Anamorsin_N"/>
    <property type="match status" value="1"/>
</dbReference>
<dbReference type="Pfam" id="PF05093">
    <property type="entry name" value="CIAPIN1"/>
    <property type="match status" value="1"/>
</dbReference>
<dbReference type="SUPFAM" id="SSF53335">
    <property type="entry name" value="S-adenosyl-L-methionine-dependent methyltransferases"/>
    <property type="match status" value="1"/>
</dbReference>
<keyword id="KW-0001">2Fe-2S</keyword>
<keyword id="KW-0004">4Fe-4S</keyword>
<keyword id="KW-0963">Cytoplasm</keyword>
<keyword id="KW-0408">Iron</keyword>
<keyword id="KW-0411">Iron-sulfur</keyword>
<keyword id="KW-0479">Metal-binding</keyword>
<keyword id="KW-0496">Mitochondrion</keyword>
<protein>
    <recommendedName>
        <fullName evidence="1">Anamorsin homolog 1</fullName>
    </recommendedName>
    <alternativeName>
        <fullName evidence="1">Fe-S cluster assembly protein DRE2 homolog 1</fullName>
    </alternativeName>
</protein>
<evidence type="ECO:0000255" key="1">
    <source>
        <dbReference type="HAMAP-Rule" id="MF_03115"/>
    </source>
</evidence>
<feature type="chain" id="PRO_0000392344" description="Anamorsin homolog 1">
    <location>
        <begin position="1"/>
        <end position="285"/>
    </location>
</feature>
<feature type="region of interest" description="N-terminal SAM-like domain" evidence="1">
    <location>
        <begin position="1"/>
        <end position="150"/>
    </location>
</feature>
<feature type="region of interest" description="Linker" evidence="1">
    <location>
        <begin position="150"/>
        <end position="195"/>
    </location>
</feature>
<feature type="region of interest" description="Fe-S binding site A" evidence="1">
    <location>
        <begin position="206"/>
        <end position="220"/>
    </location>
</feature>
<feature type="region of interest" description="Fe-S binding site B" evidence="1">
    <location>
        <begin position="246"/>
        <end position="260"/>
    </location>
</feature>
<feature type="short sequence motif" description="Cx2C motif 1" evidence="1">
    <location>
        <begin position="246"/>
        <end position="249"/>
    </location>
</feature>
<feature type="short sequence motif" description="Cx2C motif 2" evidence="1">
    <location>
        <begin position="257"/>
        <end position="260"/>
    </location>
</feature>
<feature type="binding site" evidence="1">
    <location>
        <position position="206"/>
    </location>
    <ligand>
        <name>[2Fe-2S] cluster</name>
        <dbReference type="ChEBI" id="CHEBI:190135"/>
    </ligand>
</feature>
<feature type="binding site" evidence="1">
    <location>
        <position position="215"/>
    </location>
    <ligand>
        <name>[2Fe-2S] cluster</name>
        <dbReference type="ChEBI" id="CHEBI:190135"/>
    </ligand>
</feature>
<feature type="binding site" evidence="1">
    <location>
        <position position="218"/>
    </location>
    <ligand>
        <name>[2Fe-2S] cluster</name>
        <dbReference type="ChEBI" id="CHEBI:190135"/>
    </ligand>
</feature>
<feature type="binding site" evidence="1">
    <location>
        <position position="220"/>
    </location>
    <ligand>
        <name>[2Fe-2S] cluster</name>
        <dbReference type="ChEBI" id="CHEBI:190135"/>
    </ligand>
</feature>
<feature type="binding site" evidence="1">
    <location>
        <position position="246"/>
    </location>
    <ligand>
        <name>[4Fe-4S] cluster</name>
        <dbReference type="ChEBI" id="CHEBI:49883"/>
    </ligand>
</feature>
<feature type="binding site" evidence="1">
    <location>
        <position position="249"/>
    </location>
    <ligand>
        <name>[4Fe-4S] cluster</name>
        <dbReference type="ChEBI" id="CHEBI:49883"/>
    </ligand>
</feature>
<feature type="binding site" evidence="1">
    <location>
        <position position="257"/>
    </location>
    <ligand>
        <name>[4Fe-4S] cluster</name>
        <dbReference type="ChEBI" id="CHEBI:49883"/>
    </ligand>
</feature>
<feature type="binding site" evidence="1">
    <location>
        <position position="260"/>
    </location>
    <ligand>
        <name>[4Fe-4S] cluster</name>
        <dbReference type="ChEBI" id="CHEBI:49883"/>
    </ligand>
</feature>
<comment type="function">
    <text evidence="1">Component of the cytosolic iron-sulfur (Fe-S) protein assembly (CIA) machinery. Required for the maturation of extramitochondrial Fe-S proteins. Part of an electron transfer chain functioning in an early step of cytosolic Fe-S biogenesis, facilitating the de novo assembly of a [4Fe-4S] cluster on the cytosolic Fe-S scaffold complex. Electrons are transferred from NADPH via a FAD- and FMN-containing diflavin oxidoreductase. Together with the diflavin oxidoreductase, also required for the assembly of the diferric tyrosyl radical cofactor of ribonucleotide reductase (RNR), probably by providing electrons for reduction during radical cofactor maturation in the catalytic small subunit.</text>
</comment>
<comment type="cofactor">
    <cofactor evidence="1">
        <name>[2Fe-2S] cluster</name>
        <dbReference type="ChEBI" id="CHEBI:190135"/>
    </cofactor>
</comment>
<comment type="cofactor">
    <cofactor evidence="1">
        <name>[4Fe-4S] cluster</name>
        <dbReference type="ChEBI" id="CHEBI:49883"/>
    </cofactor>
</comment>
<comment type="subunit">
    <text evidence="1">Monomer.</text>
</comment>
<comment type="subcellular location">
    <subcellularLocation>
        <location evidence="1">Cytoplasm</location>
    </subcellularLocation>
    <subcellularLocation>
        <location evidence="1">Mitochondrion intermembrane space</location>
    </subcellularLocation>
</comment>
<comment type="domain">
    <text evidence="1">The C-terminal domain binds 2 Fe-S clusters but is otherwise mostly in an intrinsically disordered conformation.</text>
</comment>
<comment type="domain">
    <text evidence="1">The N-terminal domain has structural similarity with S-adenosyl-L-methionine-dependent methyltransferases, but does not bind S-adenosyl-L-methionine. It is required for correct assembly of the 2 Fe-S clusters.</text>
</comment>
<comment type="domain">
    <text evidence="1">The twin Cx2C motifs are involved in the recognition by the mitochondrial MIA40-ERV1 disulfide relay system. The formation of 2 disulfide bonds in the Cx2C motifs through dithiol/disulfide exchange reactions effectively traps the protein in the mitochondrial intermembrane space.</text>
</comment>
<comment type="similarity">
    <text evidence="1">Belongs to the anamorsin family.</text>
</comment>
<organism>
    <name type="scientific">Picea sitchensis</name>
    <name type="common">Sitka spruce</name>
    <name type="synonym">Pinus sitchensis</name>
    <dbReference type="NCBI Taxonomy" id="3332"/>
    <lineage>
        <taxon>Eukaryota</taxon>
        <taxon>Viridiplantae</taxon>
        <taxon>Streptophyta</taxon>
        <taxon>Embryophyta</taxon>
        <taxon>Tracheophyta</taxon>
        <taxon>Spermatophyta</taxon>
        <taxon>Pinopsida</taxon>
        <taxon>Pinidae</taxon>
        <taxon>Conifers I</taxon>
        <taxon>Pinales</taxon>
        <taxon>Pinaceae</taxon>
        <taxon>Picea</taxon>
    </lineage>
</organism>
<reference key="1">
    <citation type="submission" date="2007-06" db="EMBL/GenBank/DDBJ databases">
        <title>Full length cDNA sequences from Sitka Spruce (Picea sitchensis).</title>
        <authorList>
            <person name="Ralph S.G."/>
            <person name="Chun H.E."/>
            <person name="Liao N."/>
            <person name="Ali J."/>
            <person name="Reid K."/>
            <person name="Kolosova N."/>
            <person name="Cooper N."/>
            <person name="Cullis C."/>
            <person name="Jancsik S."/>
            <person name="Moore R."/>
            <person name="Mayo M."/>
            <person name="Wagner S."/>
            <person name="Holt R.A."/>
            <person name="Jones S.J.M."/>
            <person name="Marra M.A."/>
            <person name="Ritland C.E."/>
            <person name="Ritland K."/>
            <person name="Bohlmann J."/>
        </authorList>
    </citation>
    <scope>NUCLEOTIDE SEQUENCE [LARGE SCALE MRNA]</scope>
</reference>